<organism>
    <name type="scientific">Capnocytophaga gingivalis</name>
    <dbReference type="NCBI Taxonomy" id="553178"/>
    <lineage>
        <taxon>Bacteria</taxon>
        <taxon>Pseudomonadati</taxon>
        <taxon>Bacteroidota</taxon>
        <taxon>Flavobacteriia</taxon>
        <taxon>Flavobacteriales</taxon>
        <taxon>Flavobacteriaceae</taxon>
        <taxon>Capnocytophaga</taxon>
    </lineage>
</organism>
<name>DPP7_CAPGI</name>
<accession>C2M262</accession>
<proteinExistence type="evidence at protein level"/>
<feature type="signal peptide" evidence="3">
    <location>
        <begin position="1"/>
        <end position="22"/>
    </location>
</feature>
<feature type="chain" id="PRO_0000435485" description="Dipeptidyl-peptidase 7">
    <location>
        <begin position="23"/>
        <end position="715"/>
    </location>
</feature>
<feature type="active site" description="Charge relay system" evidence="2">
    <location>
        <position position="87"/>
    </location>
</feature>
<feature type="active site" description="Charge relay system" evidence="2">
    <location>
        <position position="223"/>
    </location>
</feature>
<feature type="active site" description="Charge relay system" evidence="2">
    <location>
        <position position="650"/>
    </location>
</feature>
<feature type="site" description="Critical for substrate specificity of DPP7" evidence="1">
    <location>
        <position position="668"/>
    </location>
</feature>
<protein>
    <recommendedName>
        <fullName evidence="5">Dipeptidyl-peptidase 7</fullName>
        <shortName evidence="5">DPP7</shortName>
        <ecNumber evidence="4">3.4.14.-</ecNumber>
    </recommendedName>
</protein>
<comment type="function">
    <text evidence="4">Catalyzes the removal of dipeptides from the N-terminus of oligopeptides. Most potently cleaves the synthetic substrate Met-Leu-methylcoumaryl-7-amide (Met-Leu-MCA), followed by Lys-Ala-, Leu-Arg- &gt; Leu-Asp-, Leu-Glu-, &gt;Leu-Lys, and &gt;Val-Arg-MCA, while this enzyme does not hydrolyze Gly-Arg-, Gly-Gly-, Lys-Lys-, or Gly-Pro-MCA.</text>
</comment>
<comment type="similarity">
    <text evidence="6">Belongs to the peptidase S46 family.</text>
</comment>
<dbReference type="EC" id="3.4.14.-" evidence="4"/>
<dbReference type="EMBL" id="ACLQ01000003">
    <property type="protein sequence ID" value="EEK15537.1"/>
    <property type="molecule type" value="Genomic_DNA"/>
</dbReference>
<dbReference type="RefSeq" id="WP_002665659.1">
    <property type="nucleotide sequence ID" value="NZ_ACLQ01000003.1"/>
</dbReference>
<dbReference type="SMR" id="C2M262"/>
<dbReference type="STRING" id="553178.CAPGI0001_0817"/>
<dbReference type="MEROPS" id="S46.002"/>
<dbReference type="eggNOG" id="COG3591">
    <property type="taxonomic scope" value="Bacteria"/>
</dbReference>
<dbReference type="GO" id="GO:0008239">
    <property type="term" value="F:dipeptidyl-peptidase activity"/>
    <property type="evidence" value="ECO:0000314"/>
    <property type="project" value="UniProtKB"/>
</dbReference>
<dbReference type="GO" id="GO:0070009">
    <property type="term" value="F:serine-type aminopeptidase activity"/>
    <property type="evidence" value="ECO:0007669"/>
    <property type="project" value="InterPro"/>
</dbReference>
<dbReference type="GO" id="GO:0043171">
    <property type="term" value="P:peptide catabolic process"/>
    <property type="evidence" value="ECO:0000314"/>
    <property type="project" value="UniProtKB"/>
</dbReference>
<dbReference type="GO" id="GO:0006508">
    <property type="term" value="P:proteolysis"/>
    <property type="evidence" value="ECO:0007669"/>
    <property type="project" value="UniProtKB-KW"/>
</dbReference>
<dbReference type="FunFam" id="2.40.10.10:FF:000128">
    <property type="entry name" value="S46 family peptidase"/>
    <property type="match status" value="1"/>
</dbReference>
<dbReference type="Gene3D" id="2.40.10.10">
    <property type="entry name" value="Trypsin-like serine proteases"/>
    <property type="match status" value="1"/>
</dbReference>
<dbReference type="InterPro" id="IPR019500">
    <property type="entry name" value="Pep_S46"/>
</dbReference>
<dbReference type="InterPro" id="IPR009003">
    <property type="entry name" value="Peptidase_S1_PA"/>
</dbReference>
<dbReference type="InterPro" id="IPR043504">
    <property type="entry name" value="Peptidase_S1_PA_chymotrypsin"/>
</dbReference>
<dbReference type="PANTHER" id="PTHR38469">
    <property type="entry name" value="PERIPLASMIC PEPTIDASE SUBFAMILY S1B"/>
    <property type="match status" value="1"/>
</dbReference>
<dbReference type="PANTHER" id="PTHR38469:SF1">
    <property type="entry name" value="PERIPLASMIC PEPTIDASE SUBFAMILY S1B"/>
    <property type="match status" value="1"/>
</dbReference>
<dbReference type="Pfam" id="PF10459">
    <property type="entry name" value="Peptidase_S46"/>
    <property type="match status" value="1"/>
</dbReference>
<dbReference type="SUPFAM" id="SSF50494">
    <property type="entry name" value="Trypsin-like serine proteases"/>
    <property type="match status" value="1"/>
</dbReference>
<keyword id="KW-0031">Aminopeptidase</keyword>
<keyword id="KW-0378">Hydrolase</keyword>
<keyword id="KW-0645">Protease</keyword>
<keyword id="KW-0720">Serine protease</keyword>
<keyword id="KW-0732">Signal</keyword>
<evidence type="ECO:0000250" key="1">
    <source>
        <dbReference type="UniProtKB" id="B2RKV3"/>
    </source>
</evidence>
<evidence type="ECO:0000250" key="2">
    <source>
        <dbReference type="UniProtKB" id="V5YM14"/>
    </source>
</evidence>
<evidence type="ECO:0000255" key="3"/>
<evidence type="ECO:0000269" key="4">
    <source>
    </source>
</evidence>
<evidence type="ECO:0000303" key="5">
    <source>
    </source>
</evidence>
<evidence type="ECO:0000305" key="6"/>
<evidence type="ECO:0000312" key="7">
    <source>
        <dbReference type="EMBL" id="EEK15537.1"/>
    </source>
</evidence>
<gene>
    <name type="primary">dpp7</name>
    <name evidence="7" type="ORF">CAPGI0001_0817</name>
</gene>
<reference key="1">
    <citation type="submission" date="2009-04" db="EMBL/GenBank/DDBJ databases">
        <authorList>
            <person name="Sebastian Y."/>
            <person name="Madupu R."/>
            <person name="Durkin A.S."/>
            <person name="Torralba M."/>
            <person name="Methe B."/>
            <person name="Sutton G.G."/>
            <person name="Strausberg R.L."/>
            <person name="Nelson K.E."/>
        </authorList>
    </citation>
    <scope>NUCLEOTIDE SEQUENCE [LARGE SCALE GENOMIC DNA]</scope>
    <source>
        <strain>ATCC 33624 / DSM 3290 / CIP 102945 / JCM 12953 / NCTC 12372 / 27</strain>
    </source>
</reference>
<reference key="2">
    <citation type="journal article" date="2013" name="Biochimie">
        <title>Discrimination based on Gly and Arg/Ser at position 673 between dipeptidyl-peptidase (DPP) 7 and DPP11, widely distributed DPPs in pathogenic and environmental gram-negative bacteria.</title>
        <authorList>
            <person name="Rouf S.M."/>
            <person name="Ohara-Nemoto Y."/>
            <person name="Hoshino T."/>
            <person name="Fujiwara T."/>
            <person name="Ono T."/>
            <person name="Nemoto T.K."/>
        </authorList>
    </citation>
    <scope>FUNCTION</scope>
    <scope>CATALYTIC ACTIVITY</scope>
    <scope>SUBSTRATE SPECIFICITY</scope>
    <source>
        <strain>ATCC 33624 / DSM 3290 / CIP 102945 / JCM 12953 / NCTC 12372 / 27</strain>
    </source>
</reference>
<sequence>MRKLIFSLVTSFFLLLPSVIRADEGMWFLMFIKRLNERDMQKKGLQLTAEEIYSINNNSLKNAIVQFNGGCTASIISPDGLVITNHHCGYGAIAGLSTPEHNYLKDGYWAKDRSQELPPKSLYVRFFVRMDNVTDRMLSVVNSSMSEKERQDALNREMEKIQKENSEGGKYVVSVRPFFQGNEYYYFVYQDFKDVRFVGTPPENVGKFGGDTDNWEWPRHTGDFSVFRVYTDKDGNPAPYSPNNIPMKAKKYLNVTLKGVQENDFAMILGYPGRTNRWVSSHWVDQQVKYGYPAWVEASKTAMDAMKAHMDKDKAVRLKYASRYASLANYWKNRQGMIDALTAHKTADLKRAAEKKFAVWANKPENKAEYGNVLSDLATYFEKTNQEAANHNYLLLFFRASRIVPQANGYVKQLNTYLNSSSDQEKQQIRERIAKELDAYYSESYLPAEIDLFADNLKLYADKATDIPQEIAQIKSQYNGDFRKFAAEVFARSIFTTKENFENFMNNPSSDALQSDPIAQIARVMIDKYYNSQSEALKDGYEKAFRKYVKGMRDSKVSLILYPDANSTLRLTYGSVKSLPKDKRNHDVKRNYYTTFKTMLEKYKPGDAEFDMPKKFVEMYEKKDFGRYLDKDGTMHVCFLTNNDITGGNSGSPVMNGKGELIGLAFDGNIEAMAGDVIFDKKLQRTIVVDIRYVLWCIDTFGGAKHIVDEMTIIQ</sequence>